<accession>A1CL63</accession>
<comment type="function">
    <text evidence="1">Required for the assembly and/or stability of the 40S ribosomal subunit. Required for the processing of the 20S rRNA-precursor to mature 18S rRNA in a late step of the maturation of 40S ribosomal subunits.</text>
</comment>
<comment type="subunit">
    <text evidence="1">Component of the small ribosomal subunit. Mature ribosomes consist of a small (40S) and a large (60S) subunit. The 40S subunit contains about 33 different proteins and 1 molecule of RNA (18S). The 60S subunit contains about 49 different proteins and 3 molecules of RNA (25S, 5.8S and 5S). Interacts with rps21.</text>
</comment>
<comment type="subcellular location">
    <subcellularLocation>
        <location evidence="1">Cytoplasm</location>
    </subcellularLocation>
</comment>
<comment type="similarity">
    <text evidence="1">Belongs to the universal ribosomal protein uS2 family.</text>
</comment>
<name>RSSA_ASPCL</name>
<sequence>MAPSQLPPMFNPTPQDIEMLLAAQCHLGSKNLQVHMEPYLWKTRPDGVNVINIGKTWEKILLAARIIAAIDNPADICVISARPYGQRAVLKFASHTGATAIAGRFTPGNFTNYITRSFKEPRLIIVTDPRTDAQAIKEASYVNIPVIALCDTDSPTDFVDVAIPTNNKGRHAIGLVWWLLAREVLRLRGTLANRETEWDVVVDLYFYRDPEAEENKEIAEETKVPGAEEIGAGAVESGFAGENWDTQAPGAGVPGSAFAAASAAAATSWEADGGDWAASSAPPAGESWAETQPTEAKW</sequence>
<proteinExistence type="inferred from homology"/>
<keyword id="KW-0963">Cytoplasm</keyword>
<keyword id="KW-1185">Reference proteome</keyword>
<keyword id="KW-0687">Ribonucleoprotein</keyword>
<keyword id="KW-0689">Ribosomal protein</keyword>
<feature type="chain" id="PRO_0000371618" description="Small ribosomal subunit protein uS2">
    <location>
        <begin position="1"/>
        <end position="298"/>
    </location>
</feature>
<feature type="region of interest" description="Disordered" evidence="2">
    <location>
        <begin position="240"/>
        <end position="298"/>
    </location>
</feature>
<feature type="compositionally biased region" description="Low complexity" evidence="2">
    <location>
        <begin position="248"/>
        <end position="271"/>
    </location>
</feature>
<feature type="compositionally biased region" description="Polar residues" evidence="2">
    <location>
        <begin position="289"/>
        <end position="298"/>
    </location>
</feature>
<organism>
    <name type="scientific">Aspergillus clavatus (strain ATCC 1007 / CBS 513.65 / DSM 816 / NCTC 3887 / NRRL 1 / QM 1276 / 107)</name>
    <dbReference type="NCBI Taxonomy" id="344612"/>
    <lineage>
        <taxon>Eukaryota</taxon>
        <taxon>Fungi</taxon>
        <taxon>Dikarya</taxon>
        <taxon>Ascomycota</taxon>
        <taxon>Pezizomycotina</taxon>
        <taxon>Eurotiomycetes</taxon>
        <taxon>Eurotiomycetidae</taxon>
        <taxon>Eurotiales</taxon>
        <taxon>Aspergillaceae</taxon>
        <taxon>Aspergillus</taxon>
        <taxon>Aspergillus subgen. Fumigati</taxon>
    </lineage>
</organism>
<protein>
    <recommendedName>
        <fullName evidence="1">Small ribosomal subunit protein uS2</fullName>
    </recommendedName>
    <alternativeName>
        <fullName evidence="3">40S ribosomal protein S0</fullName>
    </alternativeName>
</protein>
<gene>
    <name type="primary">rps0</name>
    <name type="ORF">ACLA_041030</name>
</gene>
<reference key="1">
    <citation type="journal article" date="2008" name="PLoS Genet.">
        <title>Genomic islands in the pathogenic filamentous fungus Aspergillus fumigatus.</title>
        <authorList>
            <person name="Fedorova N.D."/>
            <person name="Khaldi N."/>
            <person name="Joardar V.S."/>
            <person name="Maiti R."/>
            <person name="Amedeo P."/>
            <person name="Anderson M.J."/>
            <person name="Crabtree J."/>
            <person name="Silva J.C."/>
            <person name="Badger J.H."/>
            <person name="Albarraq A."/>
            <person name="Angiuoli S."/>
            <person name="Bussey H."/>
            <person name="Bowyer P."/>
            <person name="Cotty P.J."/>
            <person name="Dyer P.S."/>
            <person name="Egan A."/>
            <person name="Galens K."/>
            <person name="Fraser-Liggett C.M."/>
            <person name="Haas B.J."/>
            <person name="Inman J.M."/>
            <person name="Kent R."/>
            <person name="Lemieux S."/>
            <person name="Malavazi I."/>
            <person name="Orvis J."/>
            <person name="Roemer T."/>
            <person name="Ronning C.M."/>
            <person name="Sundaram J.P."/>
            <person name="Sutton G."/>
            <person name="Turner G."/>
            <person name="Venter J.C."/>
            <person name="White O.R."/>
            <person name="Whitty B.R."/>
            <person name="Youngman P."/>
            <person name="Wolfe K.H."/>
            <person name="Goldman G.H."/>
            <person name="Wortman J.R."/>
            <person name="Jiang B."/>
            <person name="Denning D.W."/>
            <person name="Nierman W.C."/>
        </authorList>
    </citation>
    <scope>NUCLEOTIDE SEQUENCE [LARGE SCALE GENOMIC DNA]</scope>
    <source>
        <strain>ATCC 1007 / CBS 513.65 / DSM 816 / NCTC 3887 / NRRL 1 / QM 1276 / 107</strain>
    </source>
</reference>
<dbReference type="EMBL" id="DS027056">
    <property type="protein sequence ID" value="EAW09887.1"/>
    <property type="molecule type" value="Genomic_DNA"/>
</dbReference>
<dbReference type="RefSeq" id="XP_001271313.1">
    <property type="nucleotide sequence ID" value="XM_001271312.1"/>
</dbReference>
<dbReference type="SMR" id="A1CL63"/>
<dbReference type="STRING" id="344612.A1CL63"/>
<dbReference type="EnsemblFungi" id="EAW09887">
    <property type="protein sequence ID" value="EAW09887"/>
    <property type="gene ID" value="ACLA_041030"/>
</dbReference>
<dbReference type="GeneID" id="4702954"/>
<dbReference type="KEGG" id="act:ACLA_041030"/>
<dbReference type="VEuPathDB" id="FungiDB:ACLA_041030"/>
<dbReference type="eggNOG" id="KOG0830">
    <property type="taxonomic scope" value="Eukaryota"/>
</dbReference>
<dbReference type="HOGENOM" id="CLU_058171_0_1_1"/>
<dbReference type="OMA" id="QCHLGAK"/>
<dbReference type="OrthoDB" id="414863at2759"/>
<dbReference type="Proteomes" id="UP000006701">
    <property type="component" value="Unassembled WGS sequence"/>
</dbReference>
<dbReference type="GO" id="GO:0022627">
    <property type="term" value="C:cytosolic small ribosomal subunit"/>
    <property type="evidence" value="ECO:0007669"/>
    <property type="project" value="UniProtKB-UniRule"/>
</dbReference>
<dbReference type="GO" id="GO:0003735">
    <property type="term" value="F:structural constituent of ribosome"/>
    <property type="evidence" value="ECO:0007669"/>
    <property type="project" value="UniProtKB-UniRule"/>
</dbReference>
<dbReference type="GO" id="GO:0000028">
    <property type="term" value="P:ribosomal small subunit assembly"/>
    <property type="evidence" value="ECO:0007669"/>
    <property type="project" value="UniProtKB-UniRule"/>
</dbReference>
<dbReference type="GO" id="GO:0006412">
    <property type="term" value="P:translation"/>
    <property type="evidence" value="ECO:0007669"/>
    <property type="project" value="UniProtKB-UniRule"/>
</dbReference>
<dbReference type="CDD" id="cd01425">
    <property type="entry name" value="RPS2"/>
    <property type="match status" value="1"/>
</dbReference>
<dbReference type="FunFam" id="3.40.50.10490:FF:000010">
    <property type="entry name" value="40S ribosomal protein S0"/>
    <property type="match status" value="1"/>
</dbReference>
<dbReference type="Gene3D" id="3.40.50.10490">
    <property type="entry name" value="Glucose-6-phosphate isomerase like protein, domain 1"/>
    <property type="match status" value="1"/>
</dbReference>
<dbReference type="HAMAP" id="MF_03015">
    <property type="entry name" value="Ribosomal_S2_euk"/>
    <property type="match status" value="1"/>
</dbReference>
<dbReference type="InterPro" id="IPR001865">
    <property type="entry name" value="Ribosomal_uS2"/>
</dbReference>
<dbReference type="InterPro" id="IPR032281">
    <property type="entry name" value="Ribosomal_uS2_C"/>
</dbReference>
<dbReference type="InterPro" id="IPR018130">
    <property type="entry name" value="Ribosomal_uS2_CS"/>
</dbReference>
<dbReference type="InterPro" id="IPR027498">
    <property type="entry name" value="Ribosomal_uS2_euk"/>
</dbReference>
<dbReference type="InterPro" id="IPR005707">
    <property type="entry name" value="Ribosomal_uS2_euk/arc"/>
</dbReference>
<dbReference type="InterPro" id="IPR023591">
    <property type="entry name" value="Ribosomal_uS2_flav_dom_sf"/>
</dbReference>
<dbReference type="NCBIfam" id="TIGR01012">
    <property type="entry name" value="uS2_euk_arch"/>
    <property type="match status" value="1"/>
</dbReference>
<dbReference type="PANTHER" id="PTHR11489">
    <property type="entry name" value="40S RIBOSOMAL PROTEIN SA"/>
    <property type="match status" value="1"/>
</dbReference>
<dbReference type="Pfam" id="PF16122">
    <property type="entry name" value="40S_SA_C"/>
    <property type="match status" value="1"/>
</dbReference>
<dbReference type="Pfam" id="PF00318">
    <property type="entry name" value="Ribosomal_S2"/>
    <property type="match status" value="2"/>
</dbReference>
<dbReference type="PRINTS" id="PR00395">
    <property type="entry name" value="RIBOSOMALS2"/>
</dbReference>
<dbReference type="SUPFAM" id="SSF52313">
    <property type="entry name" value="Ribosomal protein S2"/>
    <property type="match status" value="1"/>
</dbReference>
<dbReference type="PROSITE" id="PS00963">
    <property type="entry name" value="RIBOSOMAL_S2_2"/>
    <property type="match status" value="1"/>
</dbReference>
<evidence type="ECO:0000255" key="1">
    <source>
        <dbReference type="HAMAP-Rule" id="MF_03015"/>
    </source>
</evidence>
<evidence type="ECO:0000256" key="2">
    <source>
        <dbReference type="SAM" id="MobiDB-lite"/>
    </source>
</evidence>
<evidence type="ECO:0000305" key="3"/>